<accession>Q9FXD8</accession>
<accession>Q8L8V9</accession>
<accession>Q8W116</accession>
<keyword id="KW-0106">Calcium</keyword>
<keyword id="KW-0325">Glycoprotein</keyword>
<keyword id="KW-0456">Lyase</keyword>
<keyword id="KW-0479">Metal-binding</keyword>
<keyword id="KW-1185">Reference proteome</keyword>
<keyword id="KW-0732">Signal</keyword>
<feature type="signal peptide" evidence="2">
    <location>
        <begin position="1"/>
        <end position="27"/>
    </location>
</feature>
<feature type="chain" id="PRO_0000024869" description="Probable pectate lyase 5">
    <location>
        <begin position="28"/>
        <end position="408"/>
    </location>
</feature>
<feature type="active site" evidence="2">
    <location>
        <position position="286"/>
    </location>
</feature>
<feature type="binding site" evidence="1">
    <location>
        <position position="206"/>
    </location>
    <ligand>
        <name>Ca(2+)</name>
        <dbReference type="ChEBI" id="CHEBI:29108"/>
    </ligand>
</feature>
<feature type="binding site" evidence="1">
    <location>
        <position position="230"/>
    </location>
    <ligand>
        <name>Ca(2+)</name>
        <dbReference type="ChEBI" id="CHEBI:29108"/>
    </ligand>
</feature>
<feature type="binding site" evidence="1">
    <location>
        <position position="234"/>
    </location>
    <ligand>
        <name>Ca(2+)</name>
        <dbReference type="ChEBI" id="CHEBI:29108"/>
    </ligand>
</feature>
<feature type="glycosylation site" description="N-linked (GlcNAc...) asparagine" evidence="2">
    <location>
        <position position="45"/>
    </location>
</feature>
<feature type="sequence conflict" description="In Ref. 4; AAM67091." evidence="3" ref="4">
    <original>S</original>
    <variation>A</variation>
    <location>
        <position position="47"/>
    </location>
</feature>
<feature type="sequence conflict" description="In Ref. 4; AAM67091." evidence="3" ref="4">
    <original>R</original>
    <variation>L</variation>
    <location>
        <position position="94"/>
    </location>
</feature>
<feature type="sequence conflict" description="In Ref. 4; AAM67091." evidence="3" ref="4">
    <original>G</original>
    <variation>A</variation>
    <location>
        <position position="238"/>
    </location>
</feature>
<dbReference type="EC" id="4.2.2.2"/>
<dbReference type="EMBL" id="AC008113">
    <property type="protein sequence ID" value="AAG28907.1"/>
    <property type="status" value="ALT_SEQ"/>
    <property type="molecule type" value="Genomic_DNA"/>
</dbReference>
<dbReference type="EMBL" id="CP002684">
    <property type="protein sequence ID" value="AEE34690.1"/>
    <property type="molecule type" value="Genomic_DNA"/>
</dbReference>
<dbReference type="EMBL" id="AF462797">
    <property type="protein sequence ID" value="AAL58893.1"/>
    <property type="molecule type" value="mRNA"/>
</dbReference>
<dbReference type="EMBL" id="AY101535">
    <property type="protein sequence ID" value="AAM26656.1"/>
    <property type="molecule type" value="mRNA"/>
</dbReference>
<dbReference type="EMBL" id="AY088778">
    <property type="protein sequence ID" value="AAM67091.1"/>
    <property type="molecule type" value="mRNA"/>
</dbReference>
<dbReference type="RefSeq" id="NP_564906.1">
    <property type="nucleotide sequence ID" value="NM_105443.5"/>
</dbReference>
<dbReference type="SMR" id="Q9FXD8"/>
<dbReference type="BioGRID" id="28321">
    <property type="interactions" value="1"/>
</dbReference>
<dbReference type="FunCoup" id="Q9FXD8">
    <property type="interactions" value="118"/>
</dbReference>
<dbReference type="STRING" id="3702.Q9FXD8"/>
<dbReference type="CAZy" id="PL1">
    <property type="family name" value="Polysaccharide Lyase Family 1"/>
</dbReference>
<dbReference type="GlyGen" id="Q9FXD8">
    <property type="glycosylation" value="1 site"/>
</dbReference>
<dbReference type="PaxDb" id="3702-AT1G67750.1"/>
<dbReference type="ProteomicsDB" id="226204"/>
<dbReference type="EnsemblPlants" id="AT1G67750.1">
    <property type="protein sequence ID" value="AT1G67750.1"/>
    <property type="gene ID" value="AT1G67750"/>
</dbReference>
<dbReference type="GeneID" id="843100"/>
<dbReference type="Gramene" id="AT1G67750.1">
    <property type="protein sequence ID" value="AT1G67750.1"/>
    <property type="gene ID" value="AT1G67750"/>
</dbReference>
<dbReference type="KEGG" id="ath:AT1G67750"/>
<dbReference type="Araport" id="AT1G67750"/>
<dbReference type="TAIR" id="AT1G67750"/>
<dbReference type="eggNOG" id="ENOG502QQ5F">
    <property type="taxonomic scope" value="Eukaryota"/>
</dbReference>
<dbReference type="HOGENOM" id="CLU_026608_0_1_1"/>
<dbReference type="InParanoid" id="Q9FXD8"/>
<dbReference type="OMA" id="IHDCKRK"/>
<dbReference type="OrthoDB" id="1637350at2759"/>
<dbReference type="PhylomeDB" id="Q9FXD8"/>
<dbReference type="BioCyc" id="ARA:AT1G67750-MONOMER"/>
<dbReference type="UniPathway" id="UPA00545">
    <property type="reaction ID" value="UER00824"/>
</dbReference>
<dbReference type="PRO" id="PR:Q9FXD8"/>
<dbReference type="Proteomes" id="UP000006548">
    <property type="component" value="Chromosome 1"/>
</dbReference>
<dbReference type="ExpressionAtlas" id="Q9FXD8">
    <property type="expression patterns" value="baseline and differential"/>
</dbReference>
<dbReference type="GO" id="GO:0005739">
    <property type="term" value="C:mitochondrion"/>
    <property type="evidence" value="ECO:0007005"/>
    <property type="project" value="TAIR"/>
</dbReference>
<dbReference type="GO" id="GO:0046872">
    <property type="term" value="F:metal ion binding"/>
    <property type="evidence" value="ECO:0007669"/>
    <property type="project" value="UniProtKB-KW"/>
</dbReference>
<dbReference type="GO" id="GO:0030570">
    <property type="term" value="F:pectate lyase activity"/>
    <property type="evidence" value="ECO:0007669"/>
    <property type="project" value="UniProtKB-EC"/>
</dbReference>
<dbReference type="GO" id="GO:0045490">
    <property type="term" value="P:pectin catabolic process"/>
    <property type="evidence" value="ECO:0007669"/>
    <property type="project" value="UniProtKB-UniPathway"/>
</dbReference>
<dbReference type="FunFam" id="2.160.20.10:FF:000009">
    <property type="entry name" value="Pectate lyase"/>
    <property type="match status" value="1"/>
</dbReference>
<dbReference type="Gene3D" id="2.160.20.10">
    <property type="entry name" value="Single-stranded right-handed beta-helix, Pectin lyase-like"/>
    <property type="match status" value="1"/>
</dbReference>
<dbReference type="InterPro" id="IPR018082">
    <property type="entry name" value="AmbAllergen"/>
</dbReference>
<dbReference type="InterPro" id="IPR002022">
    <property type="entry name" value="Pec_lyase"/>
</dbReference>
<dbReference type="InterPro" id="IPR012334">
    <property type="entry name" value="Pectin_lyas_fold"/>
</dbReference>
<dbReference type="InterPro" id="IPR011050">
    <property type="entry name" value="Pectin_lyase_fold/virulence"/>
</dbReference>
<dbReference type="InterPro" id="IPR045032">
    <property type="entry name" value="PEL"/>
</dbReference>
<dbReference type="PANTHER" id="PTHR31683">
    <property type="entry name" value="PECTATE LYASE 18-RELATED"/>
    <property type="match status" value="1"/>
</dbReference>
<dbReference type="PANTHER" id="PTHR31683:SF164">
    <property type="entry name" value="PECTATE LYASE 5-RELATED"/>
    <property type="match status" value="1"/>
</dbReference>
<dbReference type="Pfam" id="PF00544">
    <property type="entry name" value="Pectate_lyase_4"/>
    <property type="match status" value="1"/>
</dbReference>
<dbReference type="PRINTS" id="PR00807">
    <property type="entry name" value="AMBALLERGEN"/>
</dbReference>
<dbReference type="SMART" id="SM00656">
    <property type="entry name" value="Amb_all"/>
    <property type="match status" value="1"/>
</dbReference>
<dbReference type="SUPFAM" id="SSF51126">
    <property type="entry name" value="Pectin lyase-like"/>
    <property type="match status" value="1"/>
</dbReference>
<proteinExistence type="evidence at transcript level"/>
<comment type="catalytic activity">
    <reaction>
        <text>Eliminative cleavage of (1-&gt;4)-alpha-D-galacturonan to give oligosaccharides with 4-deoxy-alpha-D-galact-4-enuronosyl groups at their non-reducing ends.</text>
        <dbReference type="EC" id="4.2.2.2"/>
    </reaction>
</comment>
<comment type="cofactor">
    <cofactor evidence="1">
        <name>Ca(2+)</name>
        <dbReference type="ChEBI" id="CHEBI:29108"/>
    </cofactor>
    <text evidence="1">Binds 1 Ca(2+) ion. Required for its activity.</text>
</comment>
<comment type="pathway">
    <text>Glycan metabolism; pectin degradation; 2-dehydro-3-deoxy-D-gluconate from pectin: step 2/5.</text>
</comment>
<comment type="similarity">
    <text evidence="3">Belongs to the polysaccharide lyase 1 family.</text>
</comment>
<comment type="sequence caution" evidence="3">
    <conflict type="erroneous gene model prediction">
        <sequence resource="EMBL-CDS" id="AAG28907"/>
    </conflict>
</comment>
<evidence type="ECO:0000250" key="1"/>
<evidence type="ECO:0000255" key="2"/>
<evidence type="ECO:0000305" key="3"/>
<reference key="1">
    <citation type="journal article" date="2000" name="Nature">
        <title>Sequence and analysis of chromosome 1 of the plant Arabidopsis thaliana.</title>
        <authorList>
            <person name="Theologis A."/>
            <person name="Ecker J.R."/>
            <person name="Palm C.J."/>
            <person name="Federspiel N.A."/>
            <person name="Kaul S."/>
            <person name="White O."/>
            <person name="Alonso J."/>
            <person name="Altafi H."/>
            <person name="Araujo R."/>
            <person name="Bowman C.L."/>
            <person name="Brooks S.Y."/>
            <person name="Buehler E."/>
            <person name="Chan A."/>
            <person name="Chao Q."/>
            <person name="Chen H."/>
            <person name="Cheuk R.F."/>
            <person name="Chin C.W."/>
            <person name="Chung M.K."/>
            <person name="Conn L."/>
            <person name="Conway A.B."/>
            <person name="Conway A.R."/>
            <person name="Creasy T.H."/>
            <person name="Dewar K."/>
            <person name="Dunn P."/>
            <person name="Etgu P."/>
            <person name="Feldblyum T.V."/>
            <person name="Feng J.-D."/>
            <person name="Fong B."/>
            <person name="Fujii C.Y."/>
            <person name="Gill J.E."/>
            <person name="Goldsmith A.D."/>
            <person name="Haas B."/>
            <person name="Hansen N.F."/>
            <person name="Hughes B."/>
            <person name="Huizar L."/>
            <person name="Hunter J.L."/>
            <person name="Jenkins J."/>
            <person name="Johnson-Hopson C."/>
            <person name="Khan S."/>
            <person name="Khaykin E."/>
            <person name="Kim C.J."/>
            <person name="Koo H.L."/>
            <person name="Kremenetskaia I."/>
            <person name="Kurtz D.B."/>
            <person name="Kwan A."/>
            <person name="Lam B."/>
            <person name="Langin-Hooper S."/>
            <person name="Lee A."/>
            <person name="Lee J.M."/>
            <person name="Lenz C.A."/>
            <person name="Li J.H."/>
            <person name="Li Y.-P."/>
            <person name="Lin X."/>
            <person name="Liu S.X."/>
            <person name="Liu Z.A."/>
            <person name="Luros J.S."/>
            <person name="Maiti R."/>
            <person name="Marziali A."/>
            <person name="Militscher J."/>
            <person name="Miranda M."/>
            <person name="Nguyen M."/>
            <person name="Nierman W.C."/>
            <person name="Osborne B.I."/>
            <person name="Pai G."/>
            <person name="Peterson J."/>
            <person name="Pham P.K."/>
            <person name="Rizzo M."/>
            <person name="Rooney T."/>
            <person name="Rowley D."/>
            <person name="Sakano H."/>
            <person name="Salzberg S.L."/>
            <person name="Schwartz J.R."/>
            <person name="Shinn P."/>
            <person name="Southwick A.M."/>
            <person name="Sun H."/>
            <person name="Tallon L.J."/>
            <person name="Tambunga G."/>
            <person name="Toriumi M.J."/>
            <person name="Town C.D."/>
            <person name="Utterback T."/>
            <person name="Van Aken S."/>
            <person name="Vaysberg M."/>
            <person name="Vysotskaia V.S."/>
            <person name="Walker M."/>
            <person name="Wu D."/>
            <person name="Yu G."/>
            <person name="Fraser C.M."/>
            <person name="Venter J.C."/>
            <person name="Davis R.W."/>
        </authorList>
    </citation>
    <scope>NUCLEOTIDE SEQUENCE [LARGE SCALE GENOMIC DNA]</scope>
    <source>
        <strain>cv. Columbia</strain>
    </source>
</reference>
<reference key="2">
    <citation type="journal article" date="2017" name="Plant J.">
        <title>Araport11: a complete reannotation of the Arabidopsis thaliana reference genome.</title>
        <authorList>
            <person name="Cheng C.Y."/>
            <person name="Krishnakumar V."/>
            <person name="Chan A.P."/>
            <person name="Thibaud-Nissen F."/>
            <person name="Schobel S."/>
            <person name="Town C.D."/>
        </authorList>
    </citation>
    <scope>GENOME REANNOTATION</scope>
    <source>
        <strain>cv. Columbia</strain>
    </source>
</reference>
<reference key="3">
    <citation type="journal article" date="2003" name="Science">
        <title>Empirical analysis of transcriptional activity in the Arabidopsis genome.</title>
        <authorList>
            <person name="Yamada K."/>
            <person name="Lim J."/>
            <person name="Dale J.M."/>
            <person name="Chen H."/>
            <person name="Shinn P."/>
            <person name="Palm C.J."/>
            <person name="Southwick A.M."/>
            <person name="Wu H.C."/>
            <person name="Kim C.J."/>
            <person name="Nguyen M."/>
            <person name="Pham P.K."/>
            <person name="Cheuk R.F."/>
            <person name="Karlin-Newmann G."/>
            <person name="Liu S.X."/>
            <person name="Lam B."/>
            <person name="Sakano H."/>
            <person name="Wu T."/>
            <person name="Yu G."/>
            <person name="Miranda M."/>
            <person name="Quach H.L."/>
            <person name="Tripp M."/>
            <person name="Chang C.H."/>
            <person name="Lee J.M."/>
            <person name="Toriumi M.J."/>
            <person name="Chan M.M."/>
            <person name="Tang C.C."/>
            <person name="Onodera C.S."/>
            <person name="Deng J.M."/>
            <person name="Akiyama K."/>
            <person name="Ansari Y."/>
            <person name="Arakawa T."/>
            <person name="Banh J."/>
            <person name="Banno F."/>
            <person name="Bowser L."/>
            <person name="Brooks S.Y."/>
            <person name="Carninci P."/>
            <person name="Chao Q."/>
            <person name="Choy N."/>
            <person name="Enju A."/>
            <person name="Goldsmith A.D."/>
            <person name="Gurjal M."/>
            <person name="Hansen N.F."/>
            <person name="Hayashizaki Y."/>
            <person name="Johnson-Hopson C."/>
            <person name="Hsuan V.W."/>
            <person name="Iida K."/>
            <person name="Karnes M."/>
            <person name="Khan S."/>
            <person name="Koesema E."/>
            <person name="Ishida J."/>
            <person name="Jiang P.X."/>
            <person name="Jones T."/>
            <person name="Kawai J."/>
            <person name="Kamiya A."/>
            <person name="Meyers C."/>
            <person name="Nakajima M."/>
            <person name="Narusaka M."/>
            <person name="Seki M."/>
            <person name="Sakurai T."/>
            <person name="Satou M."/>
            <person name="Tamse R."/>
            <person name="Vaysberg M."/>
            <person name="Wallender E.K."/>
            <person name="Wong C."/>
            <person name="Yamamura Y."/>
            <person name="Yuan S."/>
            <person name="Shinozaki K."/>
            <person name="Davis R.W."/>
            <person name="Theologis A."/>
            <person name="Ecker J.R."/>
        </authorList>
    </citation>
    <scope>NUCLEOTIDE SEQUENCE [LARGE SCALE MRNA]</scope>
    <source>
        <strain>cv. Columbia</strain>
    </source>
</reference>
<reference key="4">
    <citation type="submission" date="2002-03" db="EMBL/GenBank/DDBJ databases">
        <title>Full-length cDNA from Arabidopsis thaliana.</title>
        <authorList>
            <person name="Brover V.V."/>
            <person name="Troukhan M.E."/>
            <person name="Alexandrov N.A."/>
            <person name="Lu Y.-P."/>
            <person name="Flavell R.B."/>
            <person name="Feldmann K.A."/>
        </authorList>
    </citation>
    <scope>NUCLEOTIDE SEQUENCE [LARGE SCALE MRNA] OF 3-408</scope>
</reference>
<name>PLY5_ARATH</name>
<protein>
    <recommendedName>
        <fullName>Probable pectate lyase 5</fullName>
        <ecNumber>4.2.2.2</ecNumber>
    </recommendedName>
</protein>
<gene>
    <name type="ordered locus">At1g67750</name>
    <name type="ORF">F12A21.12</name>
</gene>
<sequence length="408" mass="44886">MRMTLVHLSLSLFSCLLLVLSPTFIASTPVSEPELVVQEVNEKINASRRNLGVLSCGTGNPIDDCWRCDPKWEKNRQRLADCAIGFGKHAIGGRDGKIYVVTDSSDKDVVNPKPGTLRHAVIQDEPLWIIFARDMVIKLKEELIMNSFKTIDGRGASVHIAGGACITVQYVTNIIIHGVNIHDCKRKGNAYVRDSPSHYGWRTASDGDAVSIFGGSHVWVDHCSLSNCADGLIDAIHGSTAITISNNYLSHHNKVMLLGHSDSYTRDKNMQVTIAFNHFGEGLVQRMPRCRHGYFHVVNNDYTHWQMYAIGGSAAPTINSQGNRFLAPNDHVFKEVTKYEDAPRSKWKKWNWRSEGDLFLNGAFFTPSGGGASSSYAKASSLSARPSSLVASVTSNAGALFCRKGSRC</sequence>
<organism>
    <name type="scientific">Arabidopsis thaliana</name>
    <name type="common">Mouse-ear cress</name>
    <dbReference type="NCBI Taxonomy" id="3702"/>
    <lineage>
        <taxon>Eukaryota</taxon>
        <taxon>Viridiplantae</taxon>
        <taxon>Streptophyta</taxon>
        <taxon>Embryophyta</taxon>
        <taxon>Tracheophyta</taxon>
        <taxon>Spermatophyta</taxon>
        <taxon>Magnoliopsida</taxon>
        <taxon>eudicotyledons</taxon>
        <taxon>Gunneridae</taxon>
        <taxon>Pentapetalae</taxon>
        <taxon>rosids</taxon>
        <taxon>malvids</taxon>
        <taxon>Brassicales</taxon>
        <taxon>Brassicaceae</taxon>
        <taxon>Camelineae</taxon>
        <taxon>Arabidopsis</taxon>
    </lineage>
</organism>